<gene>
    <name evidence="1" type="primary">aroQ</name>
    <name type="ordered locus">PXO_03007</name>
</gene>
<protein>
    <recommendedName>
        <fullName evidence="1">3-dehydroquinate dehydratase</fullName>
        <shortName evidence="1">3-dehydroquinase</shortName>
        <ecNumber evidence="1">4.2.1.10</ecNumber>
    </recommendedName>
    <alternativeName>
        <fullName evidence="1">Type II DHQase</fullName>
    </alternativeName>
</protein>
<proteinExistence type="inferred from homology"/>
<organism>
    <name type="scientific">Xanthomonas oryzae pv. oryzae (strain PXO99A)</name>
    <dbReference type="NCBI Taxonomy" id="360094"/>
    <lineage>
        <taxon>Bacteria</taxon>
        <taxon>Pseudomonadati</taxon>
        <taxon>Pseudomonadota</taxon>
        <taxon>Gammaproteobacteria</taxon>
        <taxon>Lysobacterales</taxon>
        <taxon>Lysobacteraceae</taxon>
        <taxon>Xanthomonas</taxon>
    </lineage>
</organism>
<keyword id="KW-0028">Amino-acid biosynthesis</keyword>
<keyword id="KW-0057">Aromatic amino acid biosynthesis</keyword>
<keyword id="KW-0456">Lyase</keyword>
<accession>B2SR68</accession>
<feature type="chain" id="PRO_1000097634" description="3-dehydroquinate dehydratase">
    <location>
        <begin position="1"/>
        <end position="148"/>
    </location>
</feature>
<feature type="active site" description="Proton acceptor" evidence="1">
    <location>
        <position position="23"/>
    </location>
</feature>
<feature type="active site" description="Proton donor" evidence="1">
    <location>
        <position position="101"/>
    </location>
</feature>
<feature type="binding site" evidence="1">
    <location>
        <position position="75"/>
    </location>
    <ligand>
        <name>substrate</name>
    </ligand>
</feature>
<feature type="binding site" evidence="1">
    <location>
        <position position="81"/>
    </location>
    <ligand>
        <name>substrate</name>
    </ligand>
</feature>
<feature type="binding site" evidence="1">
    <location>
        <position position="88"/>
    </location>
    <ligand>
        <name>substrate</name>
    </ligand>
</feature>
<feature type="binding site" evidence="1">
    <location>
        <begin position="102"/>
        <end position="103"/>
    </location>
    <ligand>
        <name>substrate</name>
    </ligand>
</feature>
<feature type="binding site" evidence="1">
    <location>
        <position position="112"/>
    </location>
    <ligand>
        <name>substrate</name>
    </ligand>
</feature>
<feature type="site" description="Transition state stabilizer" evidence="1">
    <location>
        <position position="18"/>
    </location>
</feature>
<name>AROQ_XANOP</name>
<comment type="function">
    <text evidence="1">Catalyzes a trans-dehydration via an enolate intermediate.</text>
</comment>
<comment type="catalytic activity">
    <reaction evidence="1">
        <text>3-dehydroquinate = 3-dehydroshikimate + H2O</text>
        <dbReference type="Rhea" id="RHEA:21096"/>
        <dbReference type="ChEBI" id="CHEBI:15377"/>
        <dbReference type="ChEBI" id="CHEBI:16630"/>
        <dbReference type="ChEBI" id="CHEBI:32364"/>
        <dbReference type="EC" id="4.2.1.10"/>
    </reaction>
</comment>
<comment type="pathway">
    <text evidence="1">Metabolic intermediate biosynthesis; chorismate biosynthesis; chorismate from D-erythrose 4-phosphate and phosphoenolpyruvate: step 3/7.</text>
</comment>
<comment type="subunit">
    <text evidence="1">Homododecamer.</text>
</comment>
<comment type="similarity">
    <text evidence="1">Belongs to the type-II 3-dehydroquinase family.</text>
</comment>
<sequence length="148" mass="16019">MAHLLLLHGPNLNLLGTREPEVYGRTTLAQIDAALVDRAQAAGHALDCLQSNAEHVLVERIHAAREDGTAYILINPAAFTHTSLALRDALLGVGLPFVEIHLSNPHAREPFRHHSYLSDKADGVICGFGADSYRLALEAVIARLECDA</sequence>
<evidence type="ECO:0000255" key="1">
    <source>
        <dbReference type="HAMAP-Rule" id="MF_00169"/>
    </source>
</evidence>
<dbReference type="EC" id="4.2.1.10" evidence="1"/>
<dbReference type="EMBL" id="CP000967">
    <property type="protein sequence ID" value="ACD61208.1"/>
    <property type="molecule type" value="Genomic_DNA"/>
</dbReference>
<dbReference type="RefSeq" id="WP_011407485.1">
    <property type="nucleotide sequence ID" value="NC_010717.2"/>
</dbReference>
<dbReference type="SMR" id="B2SR68"/>
<dbReference type="KEGG" id="xop:PXO_03007"/>
<dbReference type="eggNOG" id="COG0757">
    <property type="taxonomic scope" value="Bacteria"/>
</dbReference>
<dbReference type="HOGENOM" id="CLU_090968_1_0_6"/>
<dbReference type="UniPathway" id="UPA00053">
    <property type="reaction ID" value="UER00086"/>
</dbReference>
<dbReference type="Proteomes" id="UP000001740">
    <property type="component" value="Chromosome"/>
</dbReference>
<dbReference type="GO" id="GO:0003855">
    <property type="term" value="F:3-dehydroquinate dehydratase activity"/>
    <property type="evidence" value="ECO:0007669"/>
    <property type="project" value="UniProtKB-UniRule"/>
</dbReference>
<dbReference type="GO" id="GO:0008652">
    <property type="term" value="P:amino acid biosynthetic process"/>
    <property type="evidence" value="ECO:0007669"/>
    <property type="project" value="UniProtKB-KW"/>
</dbReference>
<dbReference type="GO" id="GO:0009073">
    <property type="term" value="P:aromatic amino acid family biosynthetic process"/>
    <property type="evidence" value="ECO:0007669"/>
    <property type="project" value="UniProtKB-KW"/>
</dbReference>
<dbReference type="GO" id="GO:0009423">
    <property type="term" value="P:chorismate biosynthetic process"/>
    <property type="evidence" value="ECO:0007669"/>
    <property type="project" value="UniProtKB-UniRule"/>
</dbReference>
<dbReference type="GO" id="GO:0019631">
    <property type="term" value="P:quinate catabolic process"/>
    <property type="evidence" value="ECO:0007669"/>
    <property type="project" value="TreeGrafter"/>
</dbReference>
<dbReference type="CDD" id="cd00466">
    <property type="entry name" value="DHQase_II"/>
    <property type="match status" value="1"/>
</dbReference>
<dbReference type="Gene3D" id="3.40.50.9100">
    <property type="entry name" value="Dehydroquinase, class II"/>
    <property type="match status" value="1"/>
</dbReference>
<dbReference type="HAMAP" id="MF_00169">
    <property type="entry name" value="AroQ"/>
    <property type="match status" value="1"/>
</dbReference>
<dbReference type="InterPro" id="IPR001874">
    <property type="entry name" value="DHquinase_II"/>
</dbReference>
<dbReference type="InterPro" id="IPR018509">
    <property type="entry name" value="DHquinase_II_CS"/>
</dbReference>
<dbReference type="InterPro" id="IPR036441">
    <property type="entry name" value="DHquinase_II_sf"/>
</dbReference>
<dbReference type="NCBIfam" id="TIGR01088">
    <property type="entry name" value="aroQ"/>
    <property type="match status" value="1"/>
</dbReference>
<dbReference type="NCBIfam" id="NF003804">
    <property type="entry name" value="PRK05395.1-1"/>
    <property type="match status" value="1"/>
</dbReference>
<dbReference type="NCBIfam" id="NF003805">
    <property type="entry name" value="PRK05395.1-2"/>
    <property type="match status" value="1"/>
</dbReference>
<dbReference type="NCBIfam" id="NF003806">
    <property type="entry name" value="PRK05395.1-3"/>
    <property type="match status" value="1"/>
</dbReference>
<dbReference type="NCBIfam" id="NF003807">
    <property type="entry name" value="PRK05395.1-4"/>
    <property type="match status" value="1"/>
</dbReference>
<dbReference type="PANTHER" id="PTHR21272">
    <property type="entry name" value="CATABOLIC 3-DEHYDROQUINASE"/>
    <property type="match status" value="1"/>
</dbReference>
<dbReference type="PANTHER" id="PTHR21272:SF3">
    <property type="entry name" value="CATABOLIC 3-DEHYDROQUINASE"/>
    <property type="match status" value="1"/>
</dbReference>
<dbReference type="Pfam" id="PF01220">
    <property type="entry name" value="DHquinase_II"/>
    <property type="match status" value="1"/>
</dbReference>
<dbReference type="PIRSF" id="PIRSF001399">
    <property type="entry name" value="DHquinase_II"/>
    <property type="match status" value="1"/>
</dbReference>
<dbReference type="SUPFAM" id="SSF52304">
    <property type="entry name" value="Type II 3-dehydroquinate dehydratase"/>
    <property type="match status" value="1"/>
</dbReference>
<dbReference type="PROSITE" id="PS01029">
    <property type="entry name" value="DEHYDROQUINASE_II"/>
    <property type="match status" value="1"/>
</dbReference>
<reference key="1">
    <citation type="journal article" date="2008" name="BMC Genomics">
        <title>Genome sequence and rapid evolution of the rice pathogen Xanthomonas oryzae pv. oryzae PXO99A.</title>
        <authorList>
            <person name="Salzberg S.L."/>
            <person name="Sommer D.D."/>
            <person name="Schatz M.C."/>
            <person name="Phillippy A.M."/>
            <person name="Rabinowicz P.D."/>
            <person name="Tsuge S."/>
            <person name="Furutani A."/>
            <person name="Ochiai H."/>
            <person name="Delcher A.L."/>
            <person name="Kelley D."/>
            <person name="Madupu R."/>
            <person name="Puiu D."/>
            <person name="Radune D."/>
            <person name="Shumway M."/>
            <person name="Trapnell C."/>
            <person name="Aparna G."/>
            <person name="Jha G."/>
            <person name="Pandey A."/>
            <person name="Patil P.B."/>
            <person name="Ishihara H."/>
            <person name="Meyer D.F."/>
            <person name="Szurek B."/>
            <person name="Verdier V."/>
            <person name="Koebnik R."/>
            <person name="Dow J.M."/>
            <person name="Ryan R.P."/>
            <person name="Hirata H."/>
            <person name="Tsuyumu S."/>
            <person name="Won Lee S."/>
            <person name="Seo Y.-S."/>
            <person name="Sriariyanum M."/>
            <person name="Ronald P.C."/>
            <person name="Sonti R.V."/>
            <person name="Van Sluys M.-A."/>
            <person name="Leach J.E."/>
            <person name="White F.F."/>
            <person name="Bogdanove A.J."/>
        </authorList>
    </citation>
    <scope>NUCLEOTIDE SEQUENCE [LARGE SCALE GENOMIC DNA]</scope>
    <source>
        <strain>PXO99A</strain>
    </source>
</reference>